<accession>Q8ZPV9</accession>
<feature type="chain" id="PRO_0000436310" description="Putative glucose-6-phosphate 1-epimerase">
    <location>
        <begin position="1"/>
        <end position="294"/>
    </location>
</feature>
<feature type="active site" evidence="1 4">
    <location>
        <position position="164"/>
    </location>
</feature>
<feature type="active site" evidence="1 4">
    <location>
        <position position="267"/>
    </location>
</feature>
<feature type="binding site" evidence="1">
    <location>
        <position position="74"/>
    </location>
    <ligand>
        <name>substrate</name>
    </ligand>
</feature>
<feature type="binding site" evidence="1">
    <location>
        <position position="99"/>
    </location>
    <ligand>
        <name>substrate</name>
    </ligand>
</feature>
<feature type="binding site" evidence="1">
    <location>
        <position position="208"/>
    </location>
    <ligand>
        <name>substrate</name>
    </ligand>
</feature>
<feature type="helix" evidence="8">
    <location>
        <begin position="1"/>
        <end position="7"/>
    </location>
</feature>
<feature type="strand" evidence="8">
    <location>
        <begin position="11"/>
        <end position="13"/>
    </location>
</feature>
<feature type="strand" evidence="8">
    <location>
        <begin position="15"/>
        <end position="23"/>
    </location>
</feature>
<feature type="strand" evidence="8">
    <location>
        <begin position="26"/>
        <end position="33"/>
    </location>
</feature>
<feature type="strand" evidence="8">
    <location>
        <begin position="36"/>
        <end position="41"/>
    </location>
</feature>
<feature type="strand" evidence="8">
    <location>
        <begin position="46"/>
        <end position="52"/>
    </location>
</feature>
<feature type="strand" evidence="8">
    <location>
        <begin position="74"/>
        <end position="77"/>
    </location>
</feature>
<feature type="strand" evidence="8">
    <location>
        <begin position="79"/>
        <end position="82"/>
    </location>
</feature>
<feature type="helix" evidence="8">
    <location>
        <begin position="98"/>
        <end position="100"/>
    </location>
</feature>
<feature type="strand" evidence="8">
    <location>
        <begin position="104"/>
        <end position="110"/>
    </location>
</feature>
<feature type="strand" evidence="8">
    <location>
        <begin position="115"/>
        <end position="122"/>
    </location>
</feature>
<feature type="helix" evidence="8">
    <location>
        <begin position="125"/>
        <end position="130"/>
    </location>
</feature>
<feature type="strand" evidence="8">
    <location>
        <begin position="136"/>
        <end position="163"/>
    </location>
</feature>
<feature type="strand" evidence="8">
    <location>
        <begin position="166"/>
        <end position="168"/>
    </location>
</feature>
<feature type="helix" evidence="8">
    <location>
        <begin position="172"/>
        <end position="174"/>
    </location>
</feature>
<feature type="strand" evidence="8">
    <location>
        <begin position="176"/>
        <end position="178"/>
    </location>
</feature>
<feature type="strand" evidence="8">
    <location>
        <begin position="182"/>
        <end position="186"/>
    </location>
</feature>
<feature type="turn" evidence="8">
    <location>
        <begin position="187"/>
        <end position="191"/>
    </location>
</feature>
<feature type="strand" evidence="8">
    <location>
        <begin position="192"/>
        <end position="195"/>
    </location>
</feature>
<feature type="strand" evidence="8">
    <location>
        <begin position="197"/>
        <end position="199"/>
    </location>
</feature>
<feature type="strand" evidence="8">
    <location>
        <begin position="207"/>
        <end position="213"/>
    </location>
</feature>
<feature type="strand" evidence="8">
    <location>
        <begin position="216"/>
        <end position="222"/>
    </location>
</feature>
<feature type="turn" evidence="8">
    <location>
        <begin position="223"/>
        <end position="226"/>
    </location>
</feature>
<feature type="strand" evidence="8">
    <location>
        <begin position="227"/>
        <end position="235"/>
    </location>
</feature>
<feature type="strand" evidence="8">
    <location>
        <begin position="237"/>
        <end position="243"/>
    </location>
</feature>
<feature type="helix" evidence="8">
    <location>
        <begin position="245"/>
        <end position="251"/>
    </location>
</feature>
<feature type="helix" evidence="8">
    <location>
        <begin position="259"/>
        <end position="262"/>
    </location>
</feature>
<feature type="strand" evidence="8">
    <location>
        <begin position="263"/>
        <end position="278"/>
    </location>
</feature>
<feature type="strand" evidence="8">
    <location>
        <begin position="283"/>
        <end position="292"/>
    </location>
</feature>
<keyword id="KW-0002">3D-structure</keyword>
<keyword id="KW-0413">Isomerase</keyword>
<keyword id="KW-1185">Reference proteome</keyword>
<sequence length="294" mass="32560">MINKIFALPVIEQLTPVLSRRQLDDLDLIVVDHPQVKASFALQGAHLLSWKPVGEEEVLWLSNNTPFKTGVALRGGVPICWPWFGPAAQQGLPSHGFARNLPWALKAHNEDDNGVMLTFELQSSEATRKYWPHDFTLLARFKVGKTCEIELEAHGEFATTSALHSYFNVGDIANVKVSGLGDRFIDKVNDAKEGVLTDGIQTFPDRTDRVYLNPEACSVIHDATLNRTIDVVHHHHLNVVGWNPGPALSVSMGDMPDDGYKTFVCVETVYATAPQQATEEKPSRLAQTICVAKR</sequence>
<proteinExistence type="evidence at protein level"/>
<reference key="1">
    <citation type="journal article" date="2001" name="Nature">
        <title>Complete genome sequence of Salmonella enterica serovar Typhimurium LT2.</title>
        <authorList>
            <person name="McClelland M."/>
            <person name="Sanderson K.E."/>
            <person name="Spieth J."/>
            <person name="Clifton S.W."/>
            <person name="Latreille P."/>
            <person name="Courtney L."/>
            <person name="Porwollik S."/>
            <person name="Ali J."/>
            <person name="Dante M."/>
            <person name="Du F."/>
            <person name="Hou S."/>
            <person name="Layman D."/>
            <person name="Leonard S."/>
            <person name="Nguyen C."/>
            <person name="Scott K."/>
            <person name="Holmes A."/>
            <person name="Grewal N."/>
            <person name="Mulvaney E."/>
            <person name="Ryan E."/>
            <person name="Sun H."/>
            <person name="Florea L."/>
            <person name="Miller W."/>
            <person name="Stoneking T."/>
            <person name="Nhan M."/>
            <person name="Waterston R."/>
            <person name="Wilson R.K."/>
        </authorList>
    </citation>
    <scope>NUCLEOTIDE SEQUENCE [LARGE SCALE GENOMIC DNA]</scope>
    <source>
        <strain>LT2 / SGSC1412 / ATCC 700720</strain>
    </source>
</reference>
<reference evidence="6 7" key="2">
    <citation type="journal article" date="2007" name="Acta Crystallogr. D">
        <title>Structure of the putative mutarotase YeaD from Salmonella typhimurium: structural comparison with galactose mutarotases.</title>
        <authorList>
            <person name="Chittori S."/>
            <person name="Simanshu D.K."/>
            <person name="Savithri H.S."/>
            <person name="Murthy M.R."/>
        </authorList>
    </citation>
    <scope>X-RAY CRYSTALLOGRAPHY (1.90 ANGSTROMS)</scope>
    <scope>SUBUNIT</scope>
    <scope>ACTIVE SITE</scope>
    <scope>PROBABLE FUNCTION</scope>
</reference>
<organism>
    <name type="scientific">Salmonella typhimurium (strain LT2 / SGSC1412 / ATCC 700720)</name>
    <dbReference type="NCBI Taxonomy" id="99287"/>
    <lineage>
        <taxon>Bacteria</taxon>
        <taxon>Pseudomonadati</taxon>
        <taxon>Pseudomonadota</taxon>
        <taxon>Gammaproteobacteria</taxon>
        <taxon>Enterobacterales</taxon>
        <taxon>Enterobacteriaceae</taxon>
        <taxon>Salmonella</taxon>
    </lineage>
</organism>
<comment type="function">
    <text evidence="4">Probably functions as a hexose-6-phosphate 1-epimerase.</text>
</comment>
<comment type="catalytic activity">
    <reaction evidence="1">
        <text>alpha-D-glucose 6-phosphate = beta-D-glucose 6-phosphate</text>
        <dbReference type="Rhea" id="RHEA:16249"/>
        <dbReference type="ChEBI" id="CHEBI:58225"/>
        <dbReference type="ChEBI" id="CHEBI:58247"/>
        <dbReference type="EC" id="5.1.3.15"/>
    </reaction>
</comment>
<comment type="subunit">
    <text evidence="2">Monomer in solution.</text>
</comment>
<comment type="similarity">
    <text evidence="3">Belongs to the glucose-6-phosphate 1-epimerase family.</text>
</comment>
<gene>
    <name evidence="5" type="primary">yeaD</name>
    <name evidence="5" type="ordered locus">STM1289</name>
</gene>
<evidence type="ECO:0000250" key="1">
    <source>
        <dbReference type="UniProtKB" id="Q03161"/>
    </source>
</evidence>
<evidence type="ECO:0000269" key="2">
    <source>
    </source>
</evidence>
<evidence type="ECO:0000305" key="3"/>
<evidence type="ECO:0000305" key="4">
    <source>
    </source>
</evidence>
<evidence type="ECO:0000312" key="5">
    <source>
        <dbReference type="EMBL" id="AAL20214.1"/>
    </source>
</evidence>
<evidence type="ECO:0007744" key="6">
    <source>
        <dbReference type="PDB" id="2HTA"/>
    </source>
</evidence>
<evidence type="ECO:0007744" key="7">
    <source>
        <dbReference type="PDB" id="2HTB"/>
    </source>
</evidence>
<evidence type="ECO:0007829" key="8">
    <source>
        <dbReference type="PDB" id="2HTA"/>
    </source>
</evidence>
<protein>
    <recommendedName>
        <fullName evidence="1">Putative glucose-6-phosphate 1-epimerase</fullName>
        <ecNumber evidence="1">5.1.3.15</ecNumber>
    </recommendedName>
    <alternativeName>
        <fullName evidence="1">Putative D-hexose-6-phosphate mutarotase</fullName>
    </alternativeName>
</protein>
<dbReference type="EC" id="5.1.3.15" evidence="1"/>
<dbReference type="EMBL" id="AE006468">
    <property type="protein sequence ID" value="AAL20214.1"/>
    <property type="molecule type" value="Genomic_DNA"/>
</dbReference>
<dbReference type="RefSeq" id="NP_460255.1">
    <property type="nucleotide sequence ID" value="NC_003197.2"/>
</dbReference>
<dbReference type="RefSeq" id="WP_000608662.1">
    <property type="nucleotide sequence ID" value="NC_003197.2"/>
</dbReference>
<dbReference type="PDB" id="2HTA">
    <property type="method" value="X-ray"/>
    <property type="resolution" value="1.90 A"/>
    <property type="chains" value="A/B=1-294"/>
</dbReference>
<dbReference type="PDB" id="2HTB">
    <property type="method" value="X-ray"/>
    <property type="resolution" value="2.50 A"/>
    <property type="chains" value="A/B/C/D=1-294"/>
</dbReference>
<dbReference type="PDBsum" id="2HTA"/>
<dbReference type="PDBsum" id="2HTB"/>
<dbReference type="SMR" id="Q8ZPV9"/>
<dbReference type="STRING" id="99287.STM1289"/>
<dbReference type="PaxDb" id="99287-STM1289"/>
<dbReference type="GeneID" id="1252807"/>
<dbReference type="KEGG" id="stm:STM1289"/>
<dbReference type="PATRIC" id="fig|99287.12.peg.1370"/>
<dbReference type="HOGENOM" id="CLU_048345_4_1_6"/>
<dbReference type="OMA" id="TQALHSY"/>
<dbReference type="PhylomeDB" id="Q8ZPV9"/>
<dbReference type="BioCyc" id="SENT99287:STM1289-MONOMER"/>
<dbReference type="EvolutionaryTrace" id="Q8ZPV9"/>
<dbReference type="Proteomes" id="UP000001014">
    <property type="component" value="Chromosome"/>
</dbReference>
<dbReference type="GO" id="GO:0005737">
    <property type="term" value="C:cytoplasm"/>
    <property type="evidence" value="ECO:0000318"/>
    <property type="project" value="GO_Central"/>
</dbReference>
<dbReference type="GO" id="GO:0030246">
    <property type="term" value="F:carbohydrate binding"/>
    <property type="evidence" value="ECO:0007669"/>
    <property type="project" value="InterPro"/>
</dbReference>
<dbReference type="GO" id="GO:0047938">
    <property type="term" value="F:glucose-6-phosphate 1-epimerase activity"/>
    <property type="evidence" value="ECO:0000318"/>
    <property type="project" value="GO_Central"/>
</dbReference>
<dbReference type="GO" id="GO:0005975">
    <property type="term" value="P:carbohydrate metabolic process"/>
    <property type="evidence" value="ECO:0007669"/>
    <property type="project" value="InterPro"/>
</dbReference>
<dbReference type="CDD" id="cd09020">
    <property type="entry name" value="D-hex-6-P-epi_like"/>
    <property type="match status" value="1"/>
</dbReference>
<dbReference type="Gene3D" id="2.70.98.10">
    <property type="match status" value="1"/>
</dbReference>
<dbReference type="InterPro" id="IPR008183">
    <property type="entry name" value="Aldose_1/G6P_1-epimerase"/>
</dbReference>
<dbReference type="InterPro" id="IPR025532">
    <property type="entry name" value="G6P_1-epimerase"/>
</dbReference>
<dbReference type="InterPro" id="IPR011013">
    <property type="entry name" value="Gal_mutarotase_sf_dom"/>
</dbReference>
<dbReference type="InterPro" id="IPR014718">
    <property type="entry name" value="GH-type_carb-bd"/>
</dbReference>
<dbReference type="PANTHER" id="PTHR11122">
    <property type="entry name" value="APOSPORY-ASSOCIATED PROTEIN C-RELATED"/>
    <property type="match status" value="1"/>
</dbReference>
<dbReference type="PANTHER" id="PTHR11122:SF13">
    <property type="entry name" value="GLUCOSE-6-PHOSPHATE 1-EPIMERASE"/>
    <property type="match status" value="1"/>
</dbReference>
<dbReference type="Pfam" id="PF01263">
    <property type="entry name" value="Aldose_epim"/>
    <property type="match status" value="1"/>
</dbReference>
<dbReference type="PIRSF" id="PIRSF016020">
    <property type="entry name" value="PHexose_mutarotase"/>
    <property type="match status" value="1"/>
</dbReference>
<dbReference type="SUPFAM" id="SSF74650">
    <property type="entry name" value="Galactose mutarotase-like"/>
    <property type="match status" value="1"/>
</dbReference>
<name>YEAD_SALTY</name>